<feature type="signal peptide" evidence="1">
    <location>
        <begin position="1"/>
        <end position="21"/>
    </location>
</feature>
<feature type="chain" id="PRO_1000131531" description="Tol-Pal system protein TolB" evidence="1">
    <location>
        <begin position="22"/>
        <end position="430"/>
    </location>
</feature>
<protein>
    <recommendedName>
        <fullName evidence="1">Tol-Pal system protein TolB</fullName>
    </recommendedName>
</protein>
<keyword id="KW-0131">Cell cycle</keyword>
<keyword id="KW-0132">Cell division</keyword>
<keyword id="KW-0574">Periplasm</keyword>
<keyword id="KW-0732">Signal</keyword>
<organism>
    <name type="scientific">Klebsiella pneumoniae (strain 342)</name>
    <dbReference type="NCBI Taxonomy" id="507522"/>
    <lineage>
        <taxon>Bacteria</taxon>
        <taxon>Pseudomonadati</taxon>
        <taxon>Pseudomonadota</taxon>
        <taxon>Gammaproteobacteria</taxon>
        <taxon>Enterobacterales</taxon>
        <taxon>Enterobacteriaceae</taxon>
        <taxon>Klebsiella/Raoultella group</taxon>
        <taxon>Klebsiella</taxon>
        <taxon>Klebsiella pneumoniae complex</taxon>
    </lineage>
</organism>
<comment type="function">
    <text evidence="1">Part of the Tol-Pal system, which plays a role in outer membrane invagination during cell division and is important for maintaining outer membrane integrity. TolB occupies a key intermediary position in the Tol-Pal system because it communicates directly with both membrane-embedded components, Pal in the outer membrane and TolA in the inner membrane.</text>
</comment>
<comment type="subunit">
    <text evidence="1">The Tol-Pal system is composed of five core proteins: the inner membrane proteins TolA, TolQ and TolR, the periplasmic protein TolB and the outer membrane protein Pal. They form a network linking the inner and outer membranes and the peptidoglycan layer.</text>
</comment>
<comment type="subcellular location">
    <subcellularLocation>
        <location evidence="1">Periplasm</location>
    </subcellularLocation>
</comment>
<comment type="similarity">
    <text evidence="1">Belongs to the TolB family.</text>
</comment>
<sequence>MKQALRVAFGFLMLWAAVLHAEVRIEITQGVDSARPIGVVPFQWAGQGAAPEDVGGIVAADLRNSGKFNPLDRSRLPQQPTSAQEVQPAAWSALGIDAVVVGQVTSNPDGSYQVAYQLVDTGGAPGTTLAQGSFKVTKQYLRYAAHAASDAVFEKLTGIKGAFRTRIAYVVQKNGGQFPYELRVSDYDGYNQFLVHRSSQPLMSPAWSPDGSKLAYVTFESGRSALVVQTLANGAVRQIASFPQHNGAPAFSPDGSKLAFALSKTGSLNLYVMDLGSGQIRQVTNGRSNNTEPSWFPDSQNLAFTSDQAGRPQVYKVNINGGTPQRITWEGSQNQDADVSADGKTMVMVSSAGGQQHIAKQDLEAGGVQVLSSTFLDETPSLAPNGTMVIYSSSQGMGSVLNLVSTDGRFKARLPATDGQVKSPAWSPYL</sequence>
<reference key="1">
    <citation type="journal article" date="2008" name="PLoS Genet.">
        <title>Complete genome sequence of the N2-fixing broad host range endophyte Klebsiella pneumoniae 342 and virulence predictions verified in mice.</title>
        <authorList>
            <person name="Fouts D.E."/>
            <person name="Tyler H.L."/>
            <person name="DeBoy R.T."/>
            <person name="Daugherty S."/>
            <person name="Ren Q."/>
            <person name="Badger J.H."/>
            <person name="Durkin A.S."/>
            <person name="Huot H."/>
            <person name="Shrivastava S."/>
            <person name="Kothari S."/>
            <person name="Dodson R.J."/>
            <person name="Mohamoud Y."/>
            <person name="Khouri H."/>
            <person name="Roesch L.F.W."/>
            <person name="Krogfelt K.A."/>
            <person name="Struve C."/>
            <person name="Triplett E.W."/>
            <person name="Methe B.A."/>
        </authorList>
    </citation>
    <scope>NUCLEOTIDE SEQUENCE [LARGE SCALE GENOMIC DNA]</scope>
    <source>
        <strain>342</strain>
    </source>
</reference>
<dbReference type="EMBL" id="CP000964">
    <property type="protein sequence ID" value="ACI06649.1"/>
    <property type="molecule type" value="Genomic_DNA"/>
</dbReference>
<dbReference type="SMR" id="B5XZC1"/>
<dbReference type="KEGG" id="kpe:KPK_3826"/>
<dbReference type="HOGENOM" id="CLU_047123_0_0_6"/>
<dbReference type="Proteomes" id="UP000001734">
    <property type="component" value="Chromosome"/>
</dbReference>
<dbReference type="GO" id="GO:0042597">
    <property type="term" value="C:periplasmic space"/>
    <property type="evidence" value="ECO:0007669"/>
    <property type="project" value="UniProtKB-SubCell"/>
</dbReference>
<dbReference type="GO" id="GO:0051301">
    <property type="term" value="P:cell division"/>
    <property type="evidence" value="ECO:0007669"/>
    <property type="project" value="UniProtKB-UniRule"/>
</dbReference>
<dbReference type="GO" id="GO:0017038">
    <property type="term" value="P:protein import"/>
    <property type="evidence" value="ECO:0007669"/>
    <property type="project" value="InterPro"/>
</dbReference>
<dbReference type="FunFam" id="2.120.10.30:FF:000022">
    <property type="entry name" value="Tol-Pal system protein TolB"/>
    <property type="match status" value="1"/>
</dbReference>
<dbReference type="Gene3D" id="2.120.10.30">
    <property type="entry name" value="TolB, C-terminal domain"/>
    <property type="match status" value="1"/>
</dbReference>
<dbReference type="Gene3D" id="3.40.50.10070">
    <property type="entry name" value="TolB, N-terminal domain"/>
    <property type="match status" value="1"/>
</dbReference>
<dbReference type="HAMAP" id="MF_00671">
    <property type="entry name" value="TolB"/>
    <property type="match status" value="1"/>
</dbReference>
<dbReference type="InterPro" id="IPR011042">
    <property type="entry name" value="6-blade_b-propeller_TolB-like"/>
</dbReference>
<dbReference type="InterPro" id="IPR011659">
    <property type="entry name" value="PD40"/>
</dbReference>
<dbReference type="InterPro" id="IPR014167">
    <property type="entry name" value="Tol-Pal_TolB"/>
</dbReference>
<dbReference type="InterPro" id="IPR007195">
    <property type="entry name" value="TolB_N"/>
</dbReference>
<dbReference type="NCBIfam" id="TIGR02800">
    <property type="entry name" value="propeller_TolB"/>
    <property type="match status" value="1"/>
</dbReference>
<dbReference type="PANTHER" id="PTHR36842:SF1">
    <property type="entry name" value="PROTEIN TOLB"/>
    <property type="match status" value="1"/>
</dbReference>
<dbReference type="PANTHER" id="PTHR36842">
    <property type="entry name" value="PROTEIN TOLB HOMOLOG"/>
    <property type="match status" value="1"/>
</dbReference>
<dbReference type="Pfam" id="PF07676">
    <property type="entry name" value="PD40"/>
    <property type="match status" value="4"/>
</dbReference>
<dbReference type="Pfam" id="PF04052">
    <property type="entry name" value="TolB_N"/>
    <property type="match status" value="1"/>
</dbReference>
<dbReference type="SUPFAM" id="SSF52964">
    <property type="entry name" value="TolB, N-terminal domain"/>
    <property type="match status" value="1"/>
</dbReference>
<dbReference type="SUPFAM" id="SSF69304">
    <property type="entry name" value="Tricorn protease N-terminal domain"/>
    <property type="match status" value="1"/>
</dbReference>
<evidence type="ECO:0000255" key="1">
    <source>
        <dbReference type="HAMAP-Rule" id="MF_00671"/>
    </source>
</evidence>
<name>TOLB_KLEP3</name>
<accession>B5XZC1</accession>
<gene>
    <name evidence="1" type="primary">tolB</name>
    <name type="ordered locus">KPK_3826</name>
</gene>
<proteinExistence type="inferred from homology"/>